<keyword id="KW-0472">Membrane</keyword>
<keyword id="KW-0479">Metal-binding</keyword>
<keyword id="KW-1185">Reference proteome</keyword>
<keyword id="KW-0812">Transmembrane</keyword>
<keyword id="KW-1133">Transmembrane helix</keyword>
<keyword id="KW-0862">Zinc</keyword>
<keyword id="KW-0863">Zinc-finger</keyword>
<comment type="function">
    <text evidence="1">Promotes functional cell surface expression of the bitter taste receptors TAS2R16 and TAS2R43.</text>
</comment>
<comment type="subunit">
    <text evidence="1">Interacts with TAS2R16.</text>
</comment>
<comment type="subcellular location">
    <subcellularLocation>
        <location evidence="6">Membrane</location>
        <topology evidence="6">Single-pass type III membrane protein</topology>
    </subcellularLocation>
</comment>
<comment type="tissue specificity">
    <text evidence="4 5">Expressed predominantly in the liver. Not detected in the olfactory epithelium.</text>
</comment>
<comment type="similarity">
    <text evidence="6">Belongs to the TMEM7 family.</text>
</comment>
<gene>
    <name type="primary">Rtp3</name>
    <name type="synonym">Tmem7</name>
</gene>
<accession>Q5QGU6</accession>
<accession>E9QP29</accession>
<accession>Q2KHT1</accession>
<accession>Q8VDC2</accession>
<dbReference type="EMBL" id="AJ428064">
    <property type="protein sequence ID" value="CAD20986.1"/>
    <property type="molecule type" value="mRNA"/>
</dbReference>
<dbReference type="EMBL" id="AY562227">
    <property type="protein sequence ID" value="AAT70672.1"/>
    <property type="molecule type" value="mRNA"/>
</dbReference>
<dbReference type="EMBL" id="AC118727">
    <property type="status" value="NOT_ANNOTATED_CDS"/>
    <property type="molecule type" value="Genomic_DNA"/>
</dbReference>
<dbReference type="EMBL" id="BC112903">
    <property type="protein sequence ID" value="AAI12904.1"/>
    <property type="molecule type" value="mRNA"/>
</dbReference>
<dbReference type="CCDS" id="CCDS81087.1"/>
<dbReference type="RefSeq" id="NP_694740.2">
    <property type="nucleotide sequence ID" value="NM_153100.2"/>
</dbReference>
<dbReference type="FunCoup" id="Q5QGU6">
    <property type="interactions" value="7"/>
</dbReference>
<dbReference type="STRING" id="10090.ENSMUSP00000143305"/>
<dbReference type="GlyGen" id="Q5QGU6">
    <property type="glycosylation" value="7 sites"/>
</dbReference>
<dbReference type="iPTMnet" id="Q5QGU6"/>
<dbReference type="PhosphoSitePlus" id="Q5QGU6"/>
<dbReference type="SwissPalm" id="Q5QGU6"/>
<dbReference type="PaxDb" id="10090-ENSMUSP00000081985"/>
<dbReference type="ProteomicsDB" id="260744"/>
<dbReference type="Antibodypedia" id="2565">
    <property type="antibodies" value="55 antibodies from 11 providers"/>
</dbReference>
<dbReference type="Ensembl" id="ENSMUST00000084922.6">
    <property type="protein sequence ID" value="ENSMUSP00000081985.6"/>
    <property type="gene ID" value="ENSMUSG00000066319.7"/>
</dbReference>
<dbReference type="Ensembl" id="ENSMUST00000199891.2">
    <property type="protein sequence ID" value="ENSMUSP00000143305.2"/>
    <property type="gene ID" value="ENSMUSG00000066319.7"/>
</dbReference>
<dbReference type="GeneID" id="235636"/>
<dbReference type="KEGG" id="mmu:235636"/>
<dbReference type="UCSC" id="uc012hbo.1">
    <property type="organism name" value="mouse"/>
</dbReference>
<dbReference type="AGR" id="MGI:2446841"/>
<dbReference type="CTD" id="83597"/>
<dbReference type="MGI" id="MGI:2446841">
    <property type="gene designation" value="Rtp3"/>
</dbReference>
<dbReference type="VEuPathDB" id="HostDB:ENSMUSG00000066319"/>
<dbReference type="eggNOG" id="ENOG502S6AA">
    <property type="taxonomic scope" value="Eukaryota"/>
</dbReference>
<dbReference type="GeneTree" id="ENSGT00940000162454"/>
<dbReference type="InParanoid" id="Q5QGU6"/>
<dbReference type="OMA" id="FHRDSAK"/>
<dbReference type="OrthoDB" id="8121437at2759"/>
<dbReference type="PhylomeDB" id="Q5QGU6"/>
<dbReference type="TreeFam" id="TF333246"/>
<dbReference type="BioGRID-ORCS" id="235636">
    <property type="hits" value="2 hits in 70 CRISPR screens"/>
</dbReference>
<dbReference type="PRO" id="PR:Q5QGU6"/>
<dbReference type="Proteomes" id="UP000000589">
    <property type="component" value="Chromosome 9"/>
</dbReference>
<dbReference type="RNAct" id="Q5QGU6">
    <property type="molecule type" value="protein"/>
</dbReference>
<dbReference type="Bgee" id="ENSMUSG00000066319">
    <property type="expression patterns" value="Expressed in left lobe of liver and 43 other cell types or tissues"/>
</dbReference>
<dbReference type="ExpressionAtlas" id="Q5QGU6">
    <property type="expression patterns" value="baseline and differential"/>
</dbReference>
<dbReference type="GO" id="GO:0016020">
    <property type="term" value="C:membrane"/>
    <property type="evidence" value="ECO:0007669"/>
    <property type="project" value="UniProtKB-SubCell"/>
</dbReference>
<dbReference type="GO" id="GO:0008270">
    <property type="term" value="F:zinc ion binding"/>
    <property type="evidence" value="ECO:0007669"/>
    <property type="project" value="UniProtKB-KW"/>
</dbReference>
<dbReference type="InterPro" id="IPR026096">
    <property type="entry name" value="R-trans_p"/>
</dbReference>
<dbReference type="InterPro" id="IPR027377">
    <property type="entry name" value="ZAR1/RTP1-5-like_Znf-3CxxC"/>
</dbReference>
<dbReference type="PANTHER" id="PTHR14402">
    <property type="entry name" value="RECEPTOR TRANSPORTING PROTEIN"/>
    <property type="match status" value="1"/>
</dbReference>
<dbReference type="PANTHER" id="PTHR14402:SF9">
    <property type="entry name" value="RECEPTOR-TRANSPORTING PROTEIN 3"/>
    <property type="match status" value="1"/>
</dbReference>
<dbReference type="Pfam" id="PF13695">
    <property type="entry name" value="Zn_ribbon_3CxxC"/>
    <property type="match status" value="1"/>
</dbReference>
<dbReference type="SMART" id="SM01328">
    <property type="entry name" value="zf-3CxxC"/>
    <property type="match status" value="1"/>
</dbReference>
<reference key="1">
    <citation type="journal article" date="2002" name="Mamm. Genome">
        <title>Comparative human/murine sequence analysis of the common eliminated region 1 from human 3p21.3.</title>
        <authorList>
            <person name="Kiss H."/>
            <person name="Darai E."/>
            <person name="Kiss C."/>
            <person name="Kost-Alimova M."/>
            <person name="Klein G."/>
            <person name="Dumanski J.P."/>
            <person name="Imreh S."/>
        </authorList>
    </citation>
    <scope>NUCLEOTIDE SEQUENCE [MRNA]</scope>
    <scope>TISSUE SPECIFICITY</scope>
    <source>
        <strain>BALB/cJ</strain>
        <tissue>Liver</tissue>
    </source>
</reference>
<reference key="2">
    <citation type="journal article" date="2004" name="Cell">
        <title>RTP family members induce functional expression of mammalian odorant receptors.</title>
        <authorList>
            <person name="Saito H."/>
            <person name="Kubota M."/>
            <person name="Roberts R.W."/>
            <person name="Chi Q."/>
            <person name="Matsunami H."/>
        </authorList>
    </citation>
    <scope>NUCLEOTIDE SEQUENCE [MRNA]</scope>
    <scope>TISSUE SPECIFICITY</scope>
</reference>
<reference key="3">
    <citation type="journal article" date="2009" name="PLoS Biol.">
        <title>Lineage-specific biology revealed by a finished genome assembly of the mouse.</title>
        <authorList>
            <person name="Church D.M."/>
            <person name="Goodstadt L."/>
            <person name="Hillier L.W."/>
            <person name="Zody M.C."/>
            <person name="Goldstein S."/>
            <person name="She X."/>
            <person name="Bult C.J."/>
            <person name="Agarwala R."/>
            <person name="Cherry J.L."/>
            <person name="DiCuccio M."/>
            <person name="Hlavina W."/>
            <person name="Kapustin Y."/>
            <person name="Meric P."/>
            <person name="Maglott D."/>
            <person name="Birtle Z."/>
            <person name="Marques A.C."/>
            <person name="Graves T."/>
            <person name="Zhou S."/>
            <person name="Teague B."/>
            <person name="Potamousis K."/>
            <person name="Churas C."/>
            <person name="Place M."/>
            <person name="Herschleb J."/>
            <person name="Runnheim R."/>
            <person name="Forrest D."/>
            <person name="Amos-Landgraf J."/>
            <person name="Schwartz D.C."/>
            <person name="Cheng Z."/>
            <person name="Lindblad-Toh K."/>
            <person name="Eichler E.E."/>
            <person name="Ponting C.P."/>
        </authorList>
    </citation>
    <scope>NUCLEOTIDE SEQUENCE [LARGE SCALE GENOMIC DNA]</scope>
    <source>
        <strain>C57BL/6J</strain>
    </source>
</reference>
<reference key="4">
    <citation type="journal article" date="2004" name="Genome Res.">
        <title>The status, quality, and expansion of the NIH full-length cDNA project: the Mammalian Gene Collection (MGC).</title>
        <authorList>
            <consortium name="The MGC Project Team"/>
        </authorList>
    </citation>
    <scope>NUCLEOTIDE SEQUENCE [LARGE SCALE MRNA]</scope>
    <source>
        <strain>FVB/N</strain>
        <tissue>Liver</tissue>
    </source>
</reference>
<reference key="5">
    <citation type="journal article" date="2010" name="Cell">
        <title>A tissue-specific atlas of mouse protein phosphorylation and expression.</title>
        <authorList>
            <person name="Huttlin E.L."/>
            <person name="Jedrychowski M.P."/>
            <person name="Elias J.E."/>
            <person name="Goswami T."/>
            <person name="Rad R."/>
            <person name="Beausoleil S.A."/>
            <person name="Villen J."/>
            <person name="Haas W."/>
            <person name="Sowa M.E."/>
            <person name="Gygi S.P."/>
        </authorList>
    </citation>
    <scope>IDENTIFICATION BY MASS SPECTROMETRY [LARGE SCALE ANALYSIS]</scope>
    <source>
        <tissue>Liver</tissue>
    </source>
</reference>
<proteinExistence type="evidence at protein level"/>
<feature type="chain" id="PRO_0000181994" description="Receptor-transporting protein 3">
    <location>
        <begin position="1"/>
        <end position="474"/>
    </location>
</feature>
<feature type="topological domain" description="Cytoplasmic" evidence="2">
    <location>
        <begin position="1"/>
        <end position="453"/>
    </location>
</feature>
<feature type="transmembrane region" description="Helical" evidence="2">
    <location>
        <begin position="454"/>
        <end position="474"/>
    </location>
</feature>
<feature type="zinc finger region" description="3CxxC-type" evidence="2">
    <location>
        <begin position="53"/>
        <end position="164"/>
    </location>
</feature>
<feature type="region of interest" description="Disordered" evidence="3">
    <location>
        <begin position="175"/>
        <end position="304"/>
    </location>
</feature>
<feature type="compositionally biased region" description="Polar residues" evidence="3">
    <location>
        <begin position="197"/>
        <end position="228"/>
    </location>
</feature>
<feature type="compositionally biased region" description="Polar residues" evidence="3">
    <location>
        <begin position="259"/>
        <end position="304"/>
    </location>
</feature>
<feature type="sequence conflict" description="In Ref. 1; CAD20986." evidence="6" ref="1">
    <location>
        <position position="1"/>
    </location>
</feature>
<feature type="sequence conflict" description="In Ref. 1; CAD20986, 2; AAT70672 and 4; AAI12904." evidence="6" ref="1 2 4">
    <original>V</original>
    <variation>A</variation>
    <location>
        <position position="197"/>
    </location>
</feature>
<feature type="sequence conflict" description="In Ref. 1; CAD20986, 2; AAT70672 and 4; AAI12904." evidence="6" ref="1 2 4">
    <original>R</original>
    <variation>Q</variation>
    <location>
        <position position="206"/>
    </location>
</feature>
<feature type="sequence conflict" description="In Ref. 1; CAD20986, 2; AAT70672 and 4; AAI12904." evidence="6" ref="1 2 4">
    <original>V</original>
    <variation>A</variation>
    <location>
        <position position="219"/>
    </location>
</feature>
<feature type="sequence conflict" description="In Ref. 1; CAD20986, 2; AAT70672 and 4; AAI12904." evidence="6" ref="1 2 4">
    <original>P</original>
    <variation>S</variation>
    <location>
        <position position="269"/>
    </location>
</feature>
<name>RTP3_MOUSE</name>
<sequence length="474" mass="52220">MMEEDIGDTEQWRHVFQELMQEVKPWHKWTLIPDKNLLPNVLKPGWTQYQQKTFARFHCPSCSRSWASGRVLIVFHMRWCEKKAKGWVKMRVFAQRCNQCPEPPFATPEVTWDNISRILNNLLFQILKKCYKEGFKQMGEIPLLGNTSLEGPHDSSNCEACLLGFCAQNDLGQASKPPAPPLSPTSSKSAREPKVTVTCSNISSSRPSSKVQMPQASKVNPQASNPTKNDPKVSCTSKPPAPPLSPTSLKSAREPKVTVTCSNISSSRPSSKVQMPQASKVNPQTSNPTKNDPKISCTSKPSTTPRLTIQQLSVVSPPAPAPTCVIQMPSPTPIDGSRAADVAKENTRSKTPKALLSSPLYVPPTSSYVPPTSSYVPPTSSYVPPTSSYVPPTSSSVIVPISSSWRLPENTICQVERNSHIHPQSQSSCCGACCESWCEIFRYSCCEAACNCMSQSPLCCLAFLILFLLLWYLL</sequence>
<protein>
    <recommendedName>
        <fullName>Receptor-transporting protein 3</fullName>
    </recommendedName>
    <alternativeName>
        <fullName>Transmembrane protein 7</fullName>
    </alternativeName>
</protein>
<organism>
    <name type="scientific">Mus musculus</name>
    <name type="common">Mouse</name>
    <dbReference type="NCBI Taxonomy" id="10090"/>
    <lineage>
        <taxon>Eukaryota</taxon>
        <taxon>Metazoa</taxon>
        <taxon>Chordata</taxon>
        <taxon>Craniata</taxon>
        <taxon>Vertebrata</taxon>
        <taxon>Euteleostomi</taxon>
        <taxon>Mammalia</taxon>
        <taxon>Eutheria</taxon>
        <taxon>Euarchontoglires</taxon>
        <taxon>Glires</taxon>
        <taxon>Rodentia</taxon>
        <taxon>Myomorpha</taxon>
        <taxon>Muroidea</taxon>
        <taxon>Muridae</taxon>
        <taxon>Murinae</taxon>
        <taxon>Mus</taxon>
        <taxon>Mus</taxon>
    </lineage>
</organism>
<evidence type="ECO:0000250" key="1">
    <source>
        <dbReference type="UniProtKB" id="Q9BQQ7"/>
    </source>
</evidence>
<evidence type="ECO:0000255" key="2"/>
<evidence type="ECO:0000256" key="3">
    <source>
        <dbReference type="SAM" id="MobiDB-lite"/>
    </source>
</evidence>
<evidence type="ECO:0000269" key="4">
    <source>
    </source>
</evidence>
<evidence type="ECO:0000269" key="5">
    <source>
    </source>
</evidence>
<evidence type="ECO:0000305" key="6"/>